<evidence type="ECO:0000255" key="1">
    <source>
        <dbReference type="HAMAP-Rule" id="MF_00148"/>
    </source>
</evidence>
<gene>
    <name evidence="1" type="primary">ung</name>
    <name type="ordered locus">FTT_1578c</name>
</gene>
<comment type="function">
    <text evidence="1">Excises uracil residues from the DNA which can arise as a result of misincorporation of dUMP residues by DNA polymerase or due to deamination of cytosine.</text>
</comment>
<comment type="catalytic activity">
    <reaction evidence="1">
        <text>Hydrolyzes single-stranded DNA or mismatched double-stranded DNA and polynucleotides, releasing free uracil.</text>
        <dbReference type="EC" id="3.2.2.27"/>
    </reaction>
</comment>
<comment type="subcellular location">
    <subcellularLocation>
        <location evidence="1">Cytoplasm</location>
    </subcellularLocation>
</comment>
<comment type="similarity">
    <text evidence="1">Belongs to the uracil-DNA glycosylase (UDG) superfamily. UNG family.</text>
</comment>
<accession>Q5NEP2</accession>
<keyword id="KW-0963">Cytoplasm</keyword>
<keyword id="KW-0227">DNA damage</keyword>
<keyword id="KW-0234">DNA repair</keyword>
<keyword id="KW-0378">Hydrolase</keyword>
<keyword id="KW-1185">Reference proteome</keyword>
<organism>
    <name type="scientific">Francisella tularensis subsp. tularensis (strain SCHU S4 / Schu 4)</name>
    <dbReference type="NCBI Taxonomy" id="177416"/>
    <lineage>
        <taxon>Bacteria</taxon>
        <taxon>Pseudomonadati</taxon>
        <taxon>Pseudomonadota</taxon>
        <taxon>Gammaproteobacteria</taxon>
        <taxon>Thiotrichales</taxon>
        <taxon>Francisellaceae</taxon>
        <taxon>Francisella</taxon>
    </lineage>
</organism>
<reference key="1">
    <citation type="journal article" date="2005" name="Nat. Genet.">
        <title>The complete genome sequence of Francisella tularensis, the causative agent of tularemia.</title>
        <authorList>
            <person name="Larsson P."/>
            <person name="Oyston P.C.F."/>
            <person name="Chain P."/>
            <person name="Chu M.C."/>
            <person name="Duffield M."/>
            <person name="Fuxelius H.-H."/>
            <person name="Garcia E."/>
            <person name="Haelltorp G."/>
            <person name="Johansson D."/>
            <person name="Isherwood K.E."/>
            <person name="Karp P.D."/>
            <person name="Larsson E."/>
            <person name="Liu Y."/>
            <person name="Michell S."/>
            <person name="Prior J."/>
            <person name="Prior R."/>
            <person name="Malfatti S."/>
            <person name="Sjoestedt A."/>
            <person name="Svensson K."/>
            <person name="Thompson N."/>
            <person name="Vergez L."/>
            <person name="Wagg J.K."/>
            <person name="Wren B.W."/>
            <person name="Lindler L.E."/>
            <person name="Andersson S.G.E."/>
            <person name="Forsman M."/>
            <person name="Titball R.W."/>
        </authorList>
    </citation>
    <scope>NUCLEOTIDE SEQUENCE [LARGE SCALE GENOMIC DNA]</scope>
    <source>
        <strain>SCHU S4 / Schu 4</strain>
    </source>
</reference>
<sequence>MTWSDILAEEKQKPYFKQILDFLACESAKGKVIFPTKENIFNAFKYTELDNLKVVILGQDPYHNYNQAHGLAFSVQKGVDIPPSLQNIYKELARSIPEFKTPNHGYLVDWAKQGVFLLNTTLTVEAHKANSHKDIGWETFTDTVINKISENKHNVVFMLWGSHARKKKVLIDSSRHLILESTHPSPLSAHRGFLGCNHFVDCNKYLIEKKDQKIDWNLLC</sequence>
<name>UNG_FRATT</name>
<dbReference type="EC" id="3.2.2.27" evidence="1"/>
<dbReference type="EMBL" id="AJ749949">
    <property type="protein sequence ID" value="CAG46211.1"/>
    <property type="molecule type" value="Genomic_DNA"/>
</dbReference>
<dbReference type="RefSeq" id="WP_003018069.1">
    <property type="nucleotide sequence ID" value="NZ_CP010290.1"/>
</dbReference>
<dbReference type="RefSeq" id="YP_170500.1">
    <property type="nucleotide sequence ID" value="NC_006570.2"/>
</dbReference>
<dbReference type="SMR" id="Q5NEP2"/>
<dbReference type="STRING" id="177416.FTT_1578c"/>
<dbReference type="DNASU" id="3192316"/>
<dbReference type="EnsemblBacteria" id="CAG46211">
    <property type="protein sequence ID" value="CAG46211"/>
    <property type="gene ID" value="FTT_1578c"/>
</dbReference>
<dbReference type="KEGG" id="ftu:FTT_1578c"/>
<dbReference type="eggNOG" id="COG0692">
    <property type="taxonomic scope" value="Bacteria"/>
</dbReference>
<dbReference type="OrthoDB" id="9804372at2"/>
<dbReference type="Proteomes" id="UP000001174">
    <property type="component" value="Chromosome"/>
</dbReference>
<dbReference type="GO" id="GO:0005737">
    <property type="term" value="C:cytoplasm"/>
    <property type="evidence" value="ECO:0007669"/>
    <property type="project" value="UniProtKB-SubCell"/>
</dbReference>
<dbReference type="GO" id="GO:0004844">
    <property type="term" value="F:uracil DNA N-glycosylase activity"/>
    <property type="evidence" value="ECO:0007669"/>
    <property type="project" value="UniProtKB-UniRule"/>
</dbReference>
<dbReference type="GO" id="GO:0097510">
    <property type="term" value="P:base-excision repair, AP site formation via deaminated base removal"/>
    <property type="evidence" value="ECO:0007669"/>
    <property type="project" value="TreeGrafter"/>
</dbReference>
<dbReference type="CDD" id="cd10027">
    <property type="entry name" value="UDG-F1-like"/>
    <property type="match status" value="1"/>
</dbReference>
<dbReference type="FunFam" id="3.40.470.10:FF:000001">
    <property type="entry name" value="Uracil-DNA glycosylase"/>
    <property type="match status" value="1"/>
</dbReference>
<dbReference type="Gene3D" id="3.40.470.10">
    <property type="entry name" value="Uracil-DNA glycosylase-like domain"/>
    <property type="match status" value="1"/>
</dbReference>
<dbReference type="HAMAP" id="MF_00148">
    <property type="entry name" value="UDG"/>
    <property type="match status" value="1"/>
</dbReference>
<dbReference type="InterPro" id="IPR002043">
    <property type="entry name" value="UDG_fam1"/>
</dbReference>
<dbReference type="InterPro" id="IPR018085">
    <property type="entry name" value="Ura-DNA_Glyclase_AS"/>
</dbReference>
<dbReference type="InterPro" id="IPR005122">
    <property type="entry name" value="Uracil-DNA_glycosylase-like"/>
</dbReference>
<dbReference type="InterPro" id="IPR036895">
    <property type="entry name" value="Uracil-DNA_glycosylase-like_sf"/>
</dbReference>
<dbReference type="NCBIfam" id="NF003588">
    <property type="entry name" value="PRK05254.1-1"/>
    <property type="match status" value="1"/>
</dbReference>
<dbReference type="NCBIfam" id="NF003589">
    <property type="entry name" value="PRK05254.1-2"/>
    <property type="match status" value="1"/>
</dbReference>
<dbReference type="NCBIfam" id="NF003591">
    <property type="entry name" value="PRK05254.1-4"/>
    <property type="match status" value="1"/>
</dbReference>
<dbReference type="NCBIfam" id="NF003592">
    <property type="entry name" value="PRK05254.1-5"/>
    <property type="match status" value="1"/>
</dbReference>
<dbReference type="NCBIfam" id="TIGR00628">
    <property type="entry name" value="ung"/>
    <property type="match status" value="1"/>
</dbReference>
<dbReference type="PANTHER" id="PTHR11264">
    <property type="entry name" value="URACIL-DNA GLYCOSYLASE"/>
    <property type="match status" value="1"/>
</dbReference>
<dbReference type="PANTHER" id="PTHR11264:SF0">
    <property type="entry name" value="URACIL-DNA GLYCOSYLASE"/>
    <property type="match status" value="1"/>
</dbReference>
<dbReference type="Pfam" id="PF03167">
    <property type="entry name" value="UDG"/>
    <property type="match status" value="1"/>
</dbReference>
<dbReference type="SMART" id="SM00986">
    <property type="entry name" value="UDG"/>
    <property type="match status" value="1"/>
</dbReference>
<dbReference type="SMART" id="SM00987">
    <property type="entry name" value="UreE_C"/>
    <property type="match status" value="1"/>
</dbReference>
<dbReference type="SUPFAM" id="SSF52141">
    <property type="entry name" value="Uracil-DNA glycosylase-like"/>
    <property type="match status" value="1"/>
</dbReference>
<dbReference type="PROSITE" id="PS00130">
    <property type="entry name" value="U_DNA_GLYCOSYLASE"/>
    <property type="match status" value="1"/>
</dbReference>
<feature type="chain" id="PRO_0000176096" description="Uracil-DNA glycosylase">
    <location>
        <begin position="1"/>
        <end position="220"/>
    </location>
</feature>
<feature type="active site" description="Proton acceptor" evidence="1">
    <location>
        <position position="60"/>
    </location>
</feature>
<protein>
    <recommendedName>
        <fullName evidence="1">Uracil-DNA glycosylase</fullName>
        <shortName evidence="1">UDG</shortName>
        <ecNumber evidence="1">3.2.2.27</ecNumber>
    </recommendedName>
</protein>
<proteinExistence type="inferred from homology"/>